<keyword id="KW-0249">Electron transport</keyword>
<keyword id="KW-0349">Heme</keyword>
<keyword id="KW-0408">Iron</keyword>
<keyword id="KW-0472">Membrane</keyword>
<keyword id="KW-0479">Metal-binding</keyword>
<keyword id="KW-0496">Mitochondrion</keyword>
<keyword id="KW-0999">Mitochondrion inner membrane</keyword>
<keyword id="KW-0679">Respiratory chain</keyword>
<keyword id="KW-0812">Transmembrane</keyword>
<keyword id="KW-1133">Transmembrane helix</keyword>
<keyword id="KW-0813">Transport</keyword>
<keyword id="KW-0830">Ubiquinone</keyword>
<reference key="1">
    <citation type="journal article" date="2005" name="J. Mammal.">
        <title>Phylogenetics of the new world rodent family Heteromyidae.</title>
        <authorList>
            <person name="Alexander L.F."/>
            <person name="Riddle B.R."/>
        </authorList>
    </citation>
    <scope>NUCLEOTIDE SEQUENCE [GENOMIC DNA]</scope>
    <source>
        <strain>Isolate LVT 2047</strain>
    </source>
</reference>
<gene>
    <name type="primary">MT-CYB</name>
    <name type="synonym">COB</name>
    <name type="synonym">CYTB</name>
    <name type="synonym">MTCYB</name>
</gene>
<geneLocation type="mitochondrion"/>
<name>CYB_DIPEL</name>
<comment type="function">
    <text evidence="2">Component of the ubiquinol-cytochrome c reductase complex (complex III or cytochrome b-c1 complex) that is part of the mitochondrial respiratory chain. The b-c1 complex mediates electron transfer from ubiquinol to cytochrome c. Contributes to the generation of a proton gradient across the mitochondrial membrane that is then used for ATP synthesis.</text>
</comment>
<comment type="cofactor">
    <cofactor evidence="2">
        <name>heme b</name>
        <dbReference type="ChEBI" id="CHEBI:60344"/>
    </cofactor>
    <text evidence="2">Binds 2 heme b groups non-covalently.</text>
</comment>
<comment type="subunit">
    <text evidence="2">The cytochrome bc1 complex contains 11 subunits: 3 respiratory subunits (MT-CYB, CYC1 and UQCRFS1), 2 core proteins (UQCRC1 and UQCRC2) and 6 low-molecular weight proteins (UQCRH/QCR6, UQCRB/QCR7, UQCRQ/QCR8, UQCR10/QCR9, UQCR11/QCR10 and a cleavage product of UQCRFS1). This cytochrome bc1 complex then forms a dimer.</text>
</comment>
<comment type="subcellular location">
    <subcellularLocation>
        <location evidence="2">Mitochondrion inner membrane</location>
        <topology evidence="2">Multi-pass membrane protein</topology>
    </subcellularLocation>
</comment>
<comment type="miscellaneous">
    <text evidence="1">Heme 1 (or BL or b562) is low-potential and absorbs at about 562 nm, and heme 2 (or BH or b566) is high-potential and absorbs at about 566 nm.</text>
</comment>
<comment type="similarity">
    <text evidence="3 4">Belongs to the cytochrome b family.</text>
</comment>
<comment type="caution">
    <text evidence="2">The full-length protein contains only eight transmembrane helices, not nine as predicted by bioinformatics tools.</text>
</comment>
<feature type="chain" id="PRO_0000255038" description="Cytochrome b">
    <location>
        <begin position="1"/>
        <end position="379"/>
    </location>
</feature>
<feature type="transmembrane region" description="Helical" evidence="2">
    <location>
        <begin position="33"/>
        <end position="53"/>
    </location>
</feature>
<feature type="transmembrane region" description="Helical" evidence="2">
    <location>
        <begin position="77"/>
        <end position="98"/>
    </location>
</feature>
<feature type="transmembrane region" description="Helical" evidence="2">
    <location>
        <begin position="113"/>
        <end position="133"/>
    </location>
</feature>
<feature type="transmembrane region" description="Helical" evidence="2">
    <location>
        <begin position="178"/>
        <end position="198"/>
    </location>
</feature>
<feature type="transmembrane region" description="Helical" evidence="2">
    <location>
        <begin position="226"/>
        <end position="246"/>
    </location>
</feature>
<feature type="transmembrane region" description="Helical" evidence="2">
    <location>
        <begin position="288"/>
        <end position="308"/>
    </location>
</feature>
<feature type="transmembrane region" description="Helical" evidence="2">
    <location>
        <begin position="320"/>
        <end position="340"/>
    </location>
</feature>
<feature type="transmembrane region" description="Helical" evidence="2">
    <location>
        <begin position="347"/>
        <end position="367"/>
    </location>
</feature>
<feature type="binding site" description="axial binding residue" evidence="2">
    <location>
        <position position="83"/>
    </location>
    <ligand>
        <name>heme b</name>
        <dbReference type="ChEBI" id="CHEBI:60344"/>
        <label>b562</label>
    </ligand>
    <ligandPart>
        <name>Fe</name>
        <dbReference type="ChEBI" id="CHEBI:18248"/>
    </ligandPart>
</feature>
<feature type="binding site" description="axial binding residue" evidence="2">
    <location>
        <position position="97"/>
    </location>
    <ligand>
        <name>heme b</name>
        <dbReference type="ChEBI" id="CHEBI:60344"/>
        <label>b566</label>
    </ligand>
    <ligandPart>
        <name>Fe</name>
        <dbReference type="ChEBI" id="CHEBI:18248"/>
    </ligandPart>
</feature>
<feature type="binding site" description="axial binding residue" evidence="2">
    <location>
        <position position="182"/>
    </location>
    <ligand>
        <name>heme b</name>
        <dbReference type="ChEBI" id="CHEBI:60344"/>
        <label>b562</label>
    </ligand>
    <ligandPart>
        <name>Fe</name>
        <dbReference type="ChEBI" id="CHEBI:18248"/>
    </ligandPart>
</feature>
<feature type="binding site" description="axial binding residue" evidence="2">
    <location>
        <position position="196"/>
    </location>
    <ligand>
        <name>heme b</name>
        <dbReference type="ChEBI" id="CHEBI:60344"/>
        <label>b566</label>
    </ligand>
    <ligandPart>
        <name>Fe</name>
        <dbReference type="ChEBI" id="CHEBI:18248"/>
    </ligandPart>
</feature>
<feature type="binding site" evidence="2">
    <location>
        <position position="201"/>
    </location>
    <ligand>
        <name>a ubiquinone</name>
        <dbReference type="ChEBI" id="CHEBI:16389"/>
    </ligand>
</feature>
<accession>Q508M9</accession>
<evidence type="ECO:0000250" key="1"/>
<evidence type="ECO:0000250" key="2">
    <source>
        <dbReference type="UniProtKB" id="P00157"/>
    </source>
</evidence>
<evidence type="ECO:0000255" key="3">
    <source>
        <dbReference type="PROSITE-ProRule" id="PRU00967"/>
    </source>
</evidence>
<evidence type="ECO:0000255" key="4">
    <source>
        <dbReference type="PROSITE-ProRule" id="PRU00968"/>
    </source>
</evidence>
<organism>
    <name type="scientific">Dipodomys elephantinus</name>
    <name type="common">Big-eared kangaroo rat</name>
    <dbReference type="NCBI Taxonomy" id="323376"/>
    <lineage>
        <taxon>Eukaryota</taxon>
        <taxon>Metazoa</taxon>
        <taxon>Chordata</taxon>
        <taxon>Craniata</taxon>
        <taxon>Vertebrata</taxon>
        <taxon>Euteleostomi</taxon>
        <taxon>Mammalia</taxon>
        <taxon>Eutheria</taxon>
        <taxon>Euarchontoglires</taxon>
        <taxon>Glires</taxon>
        <taxon>Rodentia</taxon>
        <taxon>Castorimorpha</taxon>
        <taxon>Heteromyidae</taxon>
        <taxon>Dipodomyinae</taxon>
        <taxon>Dipodomys</taxon>
    </lineage>
</organism>
<sequence>MTILRKTHPLMKMVNHAFIDLPTPANISGWWNFGSLLGLCLIIQIASGLFLAMHYTPDTLTAFSSVTHICRDVNYGWLIRYMHANGASLFFICLYLHIGRGIYYGSYSYTETWNIGIILLFLTMATAFMGYVLPWGQMSFWGATVITNLLSAIPYIGTDLVEWIWGGFSVDKATLNRFFAFHFILPFIIAATAMVHLLFLHETGSNNPLGIPSDCDKIPFHPYYTTKDFLGMILLLAFFFTIVLFFPDLLGDPDNYSPANPLNTPPHIKPEWYFLFAYAILRSIPNKLGGVIALIMSILVLALLPHIQTSKQRSLMFRPISQFLFWLLVADVLALTWIGGQPVEPPFIIIGQIASLLYFTIILILMPIAGIIENKMLKW</sequence>
<protein>
    <recommendedName>
        <fullName>Cytochrome b</fullName>
    </recommendedName>
    <alternativeName>
        <fullName>Complex III subunit 3</fullName>
    </alternativeName>
    <alternativeName>
        <fullName>Complex III subunit III</fullName>
    </alternativeName>
    <alternativeName>
        <fullName>Cytochrome b-c1 complex subunit 3</fullName>
    </alternativeName>
    <alternativeName>
        <fullName>Ubiquinol-cytochrome-c reductase complex cytochrome b subunit</fullName>
    </alternativeName>
</protein>
<dbReference type="EMBL" id="AY926374">
    <property type="protein sequence ID" value="AAY23217.1"/>
    <property type="molecule type" value="Genomic_DNA"/>
</dbReference>
<dbReference type="SMR" id="Q508M9"/>
<dbReference type="GO" id="GO:0005743">
    <property type="term" value="C:mitochondrial inner membrane"/>
    <property type="evidence" value="ECO:0007669"/>
    <property type="project" value="UniProtKB-SubCell"/>
</dbReference>
<dbReference type="GO" id="GO:0045275">
    <property type="term" value="C:respiratory chain complex III"/>
    <property type="evidence" value="ECO:0007669"/>
    <property type="project" value="InterPro"/>
</dbReference>
<dbReference type="GO" id="GO:0046872">
    <property type="term" value="F:metal ion binding"/>
    <property type="evidence" value="ECO:0007669"/>
    <property type="project" value="UniProtKB-KW"/>
</dbReference>
<dbReference type="GO" id="GO:0008121">
    <property type="term" value="F:ubiquinol-cytochrome-c reductase activity"/>
    <property type="evidence" value="ECO:0007669"/>
    <property type="project" value="InterPro"/>
</dbReference>
<dbReference type="GO" id="GO:0006122">
    <property type="term" value="P:mitochondrial electron transport, ubiquinol to cytochrome c"/>
    <property type="evidence" value="ECO:0007669"/>
    <property type="project" value="TreeGrafter"/>
</dbReference>
<dbReference type="CDD" id="cd00290">
    <property type="entry name" value="cytochrome_b_C"/>
    <property type="match status" value="1"/>
</dbReference>
<dbReference type="CDD" id="cd00284">
    <property type="entry name" value="Cytochrome_b_N"/>
    <property type="match status" value="1"/>
</dbReference>
<dbReference type="FunFam" id="1.20.810.10:FF:000002">
    <property type="entry name" value="Cytochrome b"/>
    <property type="match status" value="1"/>
</dbReference>
<dbReference type="Gene3D" id="1.20.810.10">
    <property type="entry name" value="Cytochrome Bc1 Complex, Chain C"/>
    <property type="match status" value="1"/>
</dbReference>
<dbReference type="InterPro" id="IPR005798">
    <property type="entry name" value="Cyt_b/b6_C"/>
</dbReference>
<dbReference type="InterPro" id="IPR036150">
    <property type="entry name" value="Cyt_b/b6_C_sf"/>
</dbReference>
<dbReference type="InterPro" id="IPR005797">
    <property type="entry name" value="Cyt_b/b6_N"/>
</dbReference>
<dbReference type="InterPro" id="IPR027387">
    <property type="entry name" value="Cytb/b6-like_sf"/>
</dbReference>
<dbReference type="InterPro" id="IPR030689">
    <property type="entry name" value="Cytochrome_b"/>
</dbReference>
<dbReference type="InterPro" id="IPR048260">
    <property type="entry name" value="Cytochrome_b_C_euk/bac"/>
</dbReference>
<dbReference type="InterPro" id="IPR048259">
    <property type="entry name" value="Cytochrome_b_N_euk/bac"/>
</dbReference>
<dbReference type="InterPro" id="IPR016174">
    <property type="entry name" value="Di-haem_cyt_TM"/>
</dbReference>
<dbReference type="PANTHER" id="PTHR19271">
    <property type="entry name" value="CYTOCHROME B"/>
    <property type="match status" value="1"/>
</dbReference>
<dbReference type="PANTHER" id="PTHR19271:SF16">
    <property type="entry name" value="CYTOCHROME B"/>
    <property type="match status" value="1"/>
</dbReference>
<dbReference type="Pfam" id="PF00032">
    <property type="entry name" value="Cytochrom_B_C"/>
    <property type="match status" value="1"/>
</dbReference>
<dbReference type="Pfam" id="PF00033">
    <property type="entry name" value="Cytochrome_B"/>
    <property type="match status" value="1"/>
</dbReference>
<dbReference type="PIRSF" id="PIRSF038885">
    <property type="entry name" value="COB"/>
    <property type="match status" value="1"/>
</dbReference>
<dbReference type="SUPFAM" id="SSF81648">
    <property type="entry name" value="a domain/subunit of cytochrome bc1 complex (Ubiquinol-cytochrome c reductase)"/>
    <property type="match status" value="1"/>
</dbReference>
<dbReference type="SUPFAM" id="SSF81342">
    <property type="entry name" value="Transmembrane di-heme cytochromes"/>
    <property type="match status" value="1"/>
</dbReference>
<dbReference type="PROSITE" id="PS51003">
    <property type="entry name" value="CYTB_CTER"/>
    <property type="match status" value="1"/>
</dbReference>
<dbReference type="PROSITE" id="PS51002">
    <property type="entry name" value="CYTB_NTER"/>
    <property type="match status" value="1"/>
</dbReference>
<proteinExistence type="inferred from homology"/>